<comment type="catalytic activity">
    <reaction evidence="1">
        <text>2-(N(omega)-L-arginino)succinate = fumarate + L-arginine</text>
        <dbReference type="Rhea" id="RHEA:24020"/>
        <dbReference type="ChEBI" id="CHEBI:29806"/>
        <dbReference type="ChEBI" id="CHEBI:32682"/>
        <dbReference type="ChEBI" id="CHEBI:57472"/>
        <dbReference type="EC" id="4.3.2.1"/>
    </reaction>
</comment>
<comment type="pathway">
    <text evidence="1">Amino-acid biosynthesis; L-arginine biosynthesis; L-arginine from L-ornithine and carbamoyl phosphate: step 3/3.</text>
</comment>
<comment type="subcellular location">
    <subcellularLocation>
        <location evidence="1">Cytoplasm</location>
    </subcellularLocation>
</comment>
<comment type="similarity">
    <text evidence="1">Belongs to the lyase 1 family. Argininosuccinate lyase subfamily.</text>
</comment>
<protein>
    <recommendedName>
        <fullName evidence="1">Argininosuccinate lyase</fullName>
        <shortName evidence="1">ASAL</shortName>
        <ecNumber evidence="1">4.3.2.1</ecNumber>
    </recommendedName>
    <alternativeName>
        <fullName evidence="1">Arginosuccinase</fullName>
    </alternativeName>
</protein>
<accession>P59621</accession>
<sequence>MDTTTMPNLLWHKPGVAIDASIQTFLAADDVLLDREFFLYDITASTAHAQALQRIGLLTPDELDNILRELQHLSDEYRNGTFLLDTQYEDGHSAIESRLTERLGDTGRKIHTGRSRNDQILVATRLWLKDRLTQLSTLNRDIAHHALQRAAAEQHLPMPGYTHLQRAVVSSAGMWWAGWAESFIDNALRAADTLALIDCNPLGTAAGYGVNLPLDRPHTTTALGFARLQVNPICAQLSRGKFELAALEALGSATLDLRRIAWDLSLFTTSEFAFITLPPEYSTGSSIMPNKRNPDVIELMRATHASVAAARTEIEQLLSLPSGYHRDLQNSKGAIVRGFNRGLAALELLPALLSRLQWRPDTLRAAIDPGMYATDAAIEAAIAGIPFRDAYQMAAKTADTAAQDRTPETSLTARRSPGAAADLCLETLRARWHTLTQPTSDPDPR</sequence>
<evidence type="ECO:0000255" key="1">
    <source>
        <dbReference type="HAMAP-Rule" id="MF_00006"/>
    </source>
</evidence>
<gene>
    <name evidence="1" type="primary">argH</name>
    <name type="ordered locus">PD_0295</name>
</gene>
<keyword id="KW-0028">Amino-acid biosynthesis</keyword>
<keyword id="KW-0055">Arginine biosynthesis</keyword>
<keyword id="KW-0963">Cytoplasm</keyword>
<keyword id="KW-0456">Lyase</keyword>
<keyword id="KW-1185">Reference proteome</keyword>
<proteinExistence type="inferred from homology"/>
<feature type="chain" id="PRO_0000137854" description="Argininosuccinate lyase">
    <location>
        <begin position="1"/>
        <end position="445"/>
    </location>
</feature>
<organism>
    <name type="scientific">Xylella fastidiosa (strain Temecula1 / ATCC 700964)</name>
    <dbReference type="NCBI Taxonomy" id="183190"/>
    <lineage>
        <taxon>Bacteria</taxon>
        <taxon>Pseudomonadati</taxon>
        <taxon>Pseudomonadota</taxon>
        <taxon>Gammaproteobacteria</taxon>
        <taxon>Lysobacterales</taxon>
        <taxon>Lysobacteraceae</taxon>
        <taxon>Xylella</taxon>
    </lineage>
</organism>
<reference key="1">
    <citation type="journal article" date="2003" name="J. Bacteriol.">
        <title>Comparative analyses of the complete genome sequences of Pierce's disease and citrus variegated chlorosis strains of Xylella fastidiosa.</title>
        <authorList>
            <person name="Van Sluys M.A."/>
            <person name="de Oliveira M.C."/>
            <person name="Monteiro-Vitorello C.B."/>
            <person name="Miyaki C.Y."/>
            <person name="Furlan L.R."/>
            <person name="Camargo L.E.A."/>
            <person name="da Silva A.C.R."/>
            <person name="Moon D.H."/>
            <person name="Takita M.A."/>
            <person name="Lemos E.G.M."/>
            <person name="Machado M.A."/>
            <person name="Ferro M.I.T."/>
            <person name="da Silva F.R."/>
            <person name="Goldman M.H.S."/>
            <person name="Goldman G.H."/>
            <person name="Lemos M.V.F."/>
            <person name="El-Dorry H."/>
            <person name="Tsai S.M."/>
            <person name="Carrer H."/>
            <person name="Carraro D.M."/>
            <person name="de Oliveira R.C."/>
            <person name="Nunes L.R."/>
            <person name="Siqueira W.J."/>
            <person name="Coutinho L.L."/>
            <person name="Kimura E.T."/>
            <person name="Ferro E.S."/>
            <person name="Harakava R."/>
            <person name="Kuramae E.E."/>
            <person name="Marino C.L."/>
            <person name="Giglioti E."/>
            <person name="Abreu I.L."/>
            <person name="Alves L.M.C."/>
            <person name="do Amaral A.M."/>
            <person name="Baia G.S."/>
            <person name="Blanco S.R."/>
            <person name="Brito M.S."/>
            <person name="Cannavan F.S."/>
            <person name="Celestino A.V."/>
            <person name="da Cunha A.F."/>
            <person name="Fenille R.C."/>
            <person name="Ferro J.A."/>
            <person name="Formighieri E.F."/>
            <person name="Kishi L.T."/>
            <person name="Leoni S.G."/>
            <person name="Oliveira A.R."/>
            <person name="Rosa V.E. Jr."/>
            <person name="Sassaki F.T."/>
            <person name="Sena J.A.D."/>
            <person name="de Souza A.A."/>
            <person name="Truffi D."/>
            <person name="Tsukumo F."/>
            <person name="Yanai G.M."/>
            <person name="Zaros L.G."/>
            <person name="Civerolo E.L."/>
            <person name="Simpson A.J.G."/>
            <person name="Almeida N.F. Jr."/>
            <person name="Setubal J.C."/>
            <person name="Kitajima J.P."/>
        </authorList>
    </citation>
    <scope>NUCLEOTIDE SEQUENCE [LARGE SCALE GENOMIC DNA]</scope>
    <source>
        <strain>Temecula1 / ATCC 700964</strain>
    </source>
</reference>
<dbReference type="EC" id="4.3.2.1" evidence="1"/>
<dbReference type="EMBL" id="AE009442">
    <property type="protein sequence ID" value="AAO28180.1"/>
    <property type="molecule type" value="Genomic_DNA"/>
</dbReference>
<dbReference type="SMR" id="P59621"/>
<dbReference type="KEGG" id="xft:PD_0295"/>
<dbReference type="HOGENOM" id="CLU_027272_2_0_6"/>
<dbReference type="UniPathway" id="UPA00068">
    <property type="reaction ID" value="UER00114"/>
</dbReference>
<dbReference type="Proteomes" id="UP000002516">
    <property type="component" value="Chromosome"/>
</dbReference>
<dbReference type="GO" id="GO:0005829">
    <property type="term" value="C:cytosol"/>
    <property type="evidence" value="ECO:0007669"/>
    <property type="project" value="TreeGrafter"/>
</dbReference>
<dbReference type="GO" id="GO:0004056">
    <property type="term" value="F:argininosuccinate lyase activity"/>
    <property type="evidence" value="ECO:0007669"/>
    <property type="project" value="UniProtKB-UniRule"/>
</dbReference>
<dbReference type="GO" id="GO:0042450">
    <property type="term" value="P:arginine biosynthetic process via ornithine"/>
    <property type="evidence" value="ECO:0007669"/>
    <property type="project" value="InterPro"/>
</dbReference>
<dbReference type="GO" id="GO:0006526">
    <property type="term" value="P:L-arginine biosynthetic process"/>
    <property type="evidence" value="ECO:0007669"/>
    <property type="project" value="UniProtKB-UniRule"/>
</dbReference>
<dbReference type="CDD" id="cd01359">
    <property type="entry name" value="Argininosuccinate_lyase"/>
    <property type="match status" value="1"/>
</dbReference>
<dbReference type="Gene3D" id="1.10.40.30">
    <property type="entry name" value="Fumarase/aspartase (C-terminal domain)"/>
    <property type="match status" value="1"/>
</dbReference>
<dbReference type="Gene3D" id="1.20.200.10">
    <property type="entry name" value="Fumarase/aspartase (Central domain)"/>
    <property type="match status" value="1"/>
</dbReference>
<dbReference type="Gene3D" id="1.10.275.10">
    <property type="entry name" value="Fumarase/aspartase (N-terminal domain)"/>
    <property type="match status" value="1"/>
</dbReference>
<dbReference type="HAMAP" id="MF_00006">
    <property type="entry name" value="Arg_succ_lyase"/>
    <property type="match status" value="1"/>
</dbReference>
<dbReference type="InterPro" id="IPR009049">
    <property type="entry name" value="Argininosuccinate_lyase"/>
</dbReference>
<dbReference type="InterPro" id="IPR024083">
    <property type="entry name" value="Fumarase/histidase_N"/>
</dbReference>
<dbReference type="InterPro" id="IPR020557">
    <property type="entry name" value="Fumarate_lyase_CS"/>
</dbReference>
<dbReference type="InterPro" id="IPR000362">
    <property type="entry name" value="Fumarate_lyase_fam"/>
</dbReference>
<dbReference type="InterPro" id="IPR022761">
    <property type="entry name" value="Fumarate_lyase_N"/>
</dbReference>
<dbReference type="InterPro" id="IPR008948">
    <property type="entry name" value="L-Aspartase-like"/>
</dbReference>
<dbReference type="NCBIfam" id="TIGR00838">
    <property type="entry name" value="argH"/>
    <property type="match status" value="1"/>
</dbReference>
<dbReference type="PANTHER" id="PTHR43814">
    <property type="entry name" value="ARGININOSUCCINATE LYASE"/>
    <property type="match status" value="1"/>
</dbReference>
<dbReference type="PANTHER" id="PTHR43814:SF1">
    <property type="entry name" value="ARGININOSUCCINATE LYASE"/>
    <property type="match status" value="1"/>
</dbReference>
<dbReference type="Pfam" id="PF00206">
    <property type="entry name" value="Lyase_1"/>
    <property type="match status" value="1"/>
</dbReference>
<dbReference type="PRINTS" id="PR00145">
    <property type="entry name" value="ARGSUCLYASE"/>
</dbReference>
<dbReference type="PRINTS" id="PR00149">
    <property type="entry name" value="FUMRATELYASE"/>
</dbReference>
<dbReference type="SUPFAM" id="SSF48557">
    <property type="entry name" value="L-aspartase-like"/>
    <property type="match status" value="1"/>
</dbReference>
<dbReference type="PROSITE" id="PS00163">
    <property type="entry name" value="FUMARATE_LYASES"/>
    <property type="match status" value="1"/>
</dbReference>
<name>ARLY_XYLFT</name>